<protein>
    <recommendedName>
        <fullName evidence="1">Histidine ammonia-lyase</fullName>
        <shortName evidence="1">Histidase</shortName>
        <ecNumber evidence="1">4.3.1.3</ecNumber>
    </recommendedName>
</protein>
<dbReference type="EC" id="4.3.1.3" evidence="1"/>
<dbReference type="EMBL" id="CP000510">
    <property type="protein sequence ID" value="ABM02868.1"/>
    <property type="molecule type" value="Genomic_DNA"/>
</dbReference>
<dbReference type="RefSeq" id="WP_011769431.1">
    <property type="nucleotide sequence ID" value="NC_008709.1"/>
</dbReference>
<dbReference type="SMR" id="A1STQ3"/>
<dbReference type="STRING" id="357804.Ping_1029"/>
<dbReference type="KEGG" id="pin:Ping_1029"/>
<dbReference type="eggNOG" id="COG2986">
    <property type="taxonomic scope" value="Bacteria"/>
</dbReference>
<dbReference type="HOGENOM" id="CLU_014801_4_0_6"/>
<dbReference type="OrthoDB" id="9806955at2"/>
<dbReference type="UniPathway" id="UPA00379">
    <property type="reaction ID" value="UER00549"/>
</dbReference>
<dbReference type="Proteomes" id="UP000000639">
    <property type="component" value="Chromosome"/>
</dbReference>
<dbReference type="GO" id="GO:0005737">
    <property type="term" value="C:cytoplasm"/>
    <property type="evidence" value="ECO:0007669"/>
    <property type="project" value="UniProtKB-SubCell"/>
</dbReference>
<dbReference type="GO" id="GO:0004397">
    <property type="term" value="F:histidine ammonia-lyase activity"/>
    <property type="evidence" value="ECO:0007669"/>
    <property type="project" value="UniProtKB-UniRule"/>
</dbReference>
<dbReference type="GO" id="GO:0019556">
    <property type="term" value="P:L-histidine catabolic process to glutamate and formamide"/>
    <property type="evidence" value="ECO:0007669"/>
    <property type="project" value="UniProtKB-UniPathway"/>
</dbReference>
<dbReference type="GO" id="GO:0019557">
    <property type="term" value="P:L-histidine catabolic process to glutamate and formate"/>
    <property type="evidence" value="ECO:0007669"/>
    <property type="project" value="UniProtKB-UniPathway"/>
</dbReference>
<dbReference type="CDD" id="cd00332">
    <property type="entry name" value="PAL-HAL"/>
    <property type="match status" value="1"/>
</dbReference>
<dbReference type="FunFam" id="1.10.275.10:FF:000005">
    <property type="entry name" value="Histidine ammonia-lyase"/>
    <property type="match status" value="1"/>
</dbReference>
<dbReference type="FunFam" id="1.20.200.10:FF:000003">
    <property type="entry name" value="Histidine ammonia-lyase"/>
    <property type="match status" value="1"/>
</dbReference>
<dbReference type="Gene3D" id="1.20.200.10">
    <property type="entry name" value="Fumarase/aspartase (Central domain)"/>
    <property type="match status" value="1"/>
</dbReference>
<dbReference type="Gene3D" id="1.10.275.10">
    <property type="entry name" value="Fumarase/aspartase (N-terminal domain)"/>
    <property type="match status" value="1"/>
</dbReference>
<dbReference type="HAMAP" id="MF_00229">
    <property type="entry name" value="His_ammonia_lyase"/>
    <property type="match status" value="1"/>
</dbReference>
<dbReference type="InterPro" id="IPR001106">
    <property type="entry name" value="Aromatic_Lyase"/>
</dbReference>
<dbReference type="InterPro" id="IPR024083">
    <property type="entry name" value="Fumarase/histidase_N"/>
</dbReference>
<dbReference type="InterPro" id="IPR005921">
    <property type="entry name" value="HutH"/>
</dbReference>
<dbReference type="InterPro" id="IPR008948">
    <property type="entry name" value="L-Aspartase-like"/>
</dbReference>
<dbReference type="InterPro" id="IPR022313">
    <property type="entry name" value="Phe/His_NH3-lyase_AS"/>
</dbReference>
<dbReference type="NCBIfam" id="TIGR01225">
    <property type="entry name" value="hutH"/>
    <property type="match status" value="1"/>
</dbReference>
<dbReference type="NCBIfam" id="NF006871">
    <property type="entry name" value="PRK09367.1"/>
    <property type="match status" value="1"/>
</dbReference>
<dbReference type="PANTHER" id="PTHR10362">
    <property type="entry name" value="HISTIDINE AMMONIA-LYASE"/>
    <property type="match status" value="1"/>
</dbReference>
<dbReference type="Pfam" id="PF00221">
    <property type="entry name" value="Lyase_aromatic"/>
    <property type="match status" value="1"/>
</dbReference>
<dbReference type="SUPFAM" id="SSF48557">
    <property type="entry name" value="L-aspartase-like"/>
    <property type="match status" value="1"/>
</dbReference>
<dbReference type="PROSITE" id="PS00488">
    <property type="entry name" value="PAL_HISTIDASE"/>
    <property type="match status" value="1"/>
</dbReference>
<accession>A1STQ3</accession>
<feature type="chain" id="PRO_1000021568" description="Histidine ammonia-lyase">
    <location>
        <begin position="1"/>
        <end position="510"/>
    </location>
</feature>
<feature type="modified residue" description="2,3-didehydroalanine (Ser)" evidence="1">
    <location>
        <position position="144"/>
    </location>
</feature>
<feature type="cross-link" description="5-imidazolinone (Ala-Gly)" evidence="1">
    <location>
        <begin position="143"/>
        <end position="145"/>
    </location>
</feature>
<gene>
    <name evidence="1" type="primary">hutH</name>
    <name type="ordered locus">Ping_1029</name>
</gene>
<comment type="catalytic activity">
    <reaction evidence="1">
        <text>L-histidine = trans-urocanate + NH4(+)</text>
        <dbReference type="Rhea" id="RHEA:21232"/>
        <dbReference type="ChEBI" id="CHEBI:17771"/>
        <dbReference type="ChEBI" id="CHEBI:28938"/>
        <dbReference type="ChEBI" id="CHEBI:57595"/>
        <dbReference type="EC" id="4.3.1.3"/>
    </reaction>
</comment>
<comment type="pathway">
    <text evidence="1">Amino-acid degradation; L-histidine degradation into L-glutamate; N-formimidoyl-L-glutamate from L-histidine: step 1/3.</text>
</comment>
<comment type="subcellular location">
    <subcellularLocation>
        <location evidence="1">Cytoplasm</location>
    </subcellularLocation>
</comment>
<comment type="PTM">
    <text evidence="1">Contains an active site 4-methylidene-imidazol-5-one (MIO), which is formed autocatalytically by cyclization and dehydration of residues Ala-Ser-Gly.</text>
</comment>
<comment type="similarity">
    <text evidence="1">Belongs to the PAL/histidase family.</text>
</comment>
<reference key="1">
    <citation type="journal article" date="2008" name="BMC Genomics">
        <title>Genomics of an extreme psychrophile, Psychromonas ingrahamii.</title>
        <authorList>
            <person name="Riley M."/>
            <person name="Staley J.T."/>
            <person name="Danchin A."/>
            <person name="Wang T.Z."/>
            <person name="Brettin T.S."/>
            <person name="Hauser L.J."/>
            <person name="Land M.L."/>
            <person name="Thompson L.S."/>
        </authorList>
    </citation>
    <scope>NUCLEOTIDE SEQUENCE [LARGE SCALE GENOMIC DNA]</scope>
    <source>
        <strain>DSM 17664 / CCUG 51855 / 37</strain>
    </source>
</reference>
<sequence>MYELHIKPGQLTLSQLRKISRHALKVSLESSCIEAIHASTQVVNQVIAENRVAYGINTGFGLLANTRIAPEDLETLQRSIVLSHAAGIGELMNDETVRMMMVLKINSLARGFSGIRLSVIEALMTLVNAQIYPCVPKKGSVGASGDLAPLAHMSTVLLGEGEARYQGNIISGAKALEIAGMQPITLAPKEGLALLNGTQASCAFGLEGLFAAEDLFASATLCGAMTVDAALGSRRPFDDRVHQVRGHQSQIDSALIYRHILDTHSEVSHSHTACEKVQDPYSLRCQPQVMGACLQQIRNSAAIYEIEANSVSDNPLVFAEDGDIISAGNFHAEPIAMASDNLALAIAEIGSLSERRMALLIDNSLSKLPPFLVNNGGVNSGFMIAQVTAAALASENKSLAHPACVDSLPTSANQEDHVSMATFAGRRLKEMAENTRGILAVELLAAAQGLDFRSPLKSSELIETAKAELRERVDFYDKDRYFAPDIKQANQLLIEAMHNKLIPEGLLPSL</sequence>
<proteinExistence type="inferred from homology"/>
<evidence type="ECO:0000255" key="1">
    <source>
        <dbReference type="HAMAP-Rule" id="MF_00229"/>
    </source>
</evidence>
<organism>
    <name type="scientific">Psychromonas ingrahamii (strain DSM 17664 / CCUG 51855 / 37)</name>
    <dbReference type="NCBI Taxonomy" id="357804"/>
    <lineage>
        <taxon>Bacteria</taxon>
        <taxon>Pseudomonadati</taxon>
        <taxon>Pseudomonadota</taxon>
        <taxon>Gammaproteobacteria</taxon>
        <taxon>Alteromonadales</taxon>
        <taxon>Psychromonadaceae</taxon>
        <taxon>Psychromonas</taxon>
    </lineage>
</organism>
<name>HUTH_PSYIN</name>
<keyword id="KW-0963">Cytoplasm</keyword>
<keyword id="KW-0369">Histidine metabolism</keyword>
<keyword id="KW-0456">Lyase</keyword>
<keyword id="KW-1185">Reference proteome</keyword>